<proteinExistence type="evidence at transcript level"/>
<dbReference type="EMBL" id="BC118337">
    <property type="protein sequence ID" value="AAI18338.1"/>
    <property type="molecule type" value="mRNA"/>
</dbReference>
<dbReference type="RefSeq" id="NP_001068883.1">
    <molecule id="Q17QI7-2"/>
    <property type="nucleotide sequence ID" value="NM_001075415.1"/>
</dbReference>
<dbReference type="RefSeq" id="XP_005220900.1">
    <molecule id="Q17QI7-1"/>
    <property type="nucleotide sequence ID" value="XM_005220843.5"/>
</dbReference>
<dbReference type="RefSeq" id="XP_059733865.1">
    <molecule id="Q17QI7-1"/>
    <property type="nucleotide sequence ID" value="XM_059877882.1"/>
</dbReference>
<dbReference type="RefSeq" id="XP_059733866.1">
    <molecule id="Q17QI7-2"/>
    <property type="nucleotide sequence ID" value="XM_059877883.1"/>
</dbReference>
<dbReference type="SMR" id="Q17QI7"/>
<dbReference type="FunCoup" id="Q17QI7">
    <property type="interactions" value="1929"/>
</dbReference>
<dbReference type="STRING" id="9913.ENSBTAP00000025926"/>
<dbReference type="PaxDb" id="9913-ENSBTAP00000025926"/>
<dbReference type="Ensembl" id="ENSBTAT00000025926.5">
    <molecule id="Q17QI7-1"/>
    <property type="protein sequence ID" value="ENSBTAP00000025926.3"/>
    <property type="gene ID" value="ENSBTAG00000019463.5"/>
</dbReference>
<dbReference type="GeneID" id="509684"/>
<dbReference type="KEGG" id="bta:509684"/>
<dbReference type="CTD" id="51629"/>
<dbReference type="VEuPathDB" id="HostDB:ENSBTAG00000019463"/>
<dbReference type="eggNOG" id="KOG0761">
    <property type="taxonomic scope" value="Eukaryota"/>
</dbReference>
<dbReference type="GeneTree" id="ENSGT00940000156382"/>
<dbReference type="HOGENOM" id="CLU_015166_0_0_1"/>
<dbReference type="InParanoid" id="Q17QI7"/>
<dbReference type="OMA" id="DQTSVGA"/>
<dbReference type="OrthoDB" id="1747031at2759"/>
<dbReference type="TreeFam" id="TF314720"/>
<dbReference type="Proteomes" id="UP000009136">
    <property type="component" value="Chromosome 19"/>
</dbReference>
<dbReference type="Bgee" id="ENSBTAG00000019463">
    <property type="expression patterns" value="Expressed in diaphragm and 105 other cell types or tissues"/>
</dbReference>
<dbReference type="GO" id="GO:0005743">
    <property type="term" value="C:mitochondrial inner membrane"/>
    <property type="evidence" value="ECO:0007669"/>
    <property type="project" value="UniProtKB-SubCell"/>
</dbReference>
<dbReference type="GO" id="GO:0005739">
    <property type="term" value="C:mitochondrion"/>
    <property type="evidence" value="ECO:0000318"/>
    <property type="project" value="GO_Central"/>
</dbReference>
<dbReference type="GO" id="GO:0051537">
    <property type="term" value="F:2 iron, 2 sulfur cluster binding"/>
    <property type="evidence" value="ECO:0000250"/>
    <property type="project" value="UniProtKB"/>
</dbReference>
<dbReference type="GO" id="GO:0034634">
    <property type="term" value="F:glutathione transmembrane transporter activity"/>
    <property type="evidence" value="ECO:0007669"/>
    <property type="project" value="Ensembl"/>
</dbReference>
<dbReference type="GO" id="GO:0046872">
    <property type="term" value="F:metal ion binding"/>
    <property type="evidence" value="ECO:0007669"/>
    <property type="project" value="UniProtKB-KW"/>
</dbReference>
<dbReference type="GO" id="GO:0071281">
    <property type="term" value="P:cellular response to iron ion"/>
    <property type="evidence" value="ECO:0007669"/>
    <property type="project" value="Ensembl"/>
</dbReference>
<dbReference type="GO" id="GO:0160007">
    <property type="term" value="P:glutathione import into mitochondrion"/>
    <property type="evidence" value="ECO:0000250"/>
    <property type="project" value="UniProtKB"/>
</dbReference>
<dbReference type="GO" id="GO:0006783">
    <property type="term" value="P:heme biosynthetic process"/>
    <property type="evidence" value="ECO:0007669"/>
    <property type="project" value="UniProtKB-KW"/>
</dbReference>
<dbReference type="GO" id="GO:0170036">
    <property type="term" value="P:import into the mitochondrion"/>
    <property type="evidence" value="ECO:0000318"/>
    <property type="project" value="GO_Central"/>
</dbReference>
<dbReference type="FunFam" id="1.50.40.10:FF:000203">
    <property type="entry name" value="Solute carrier family 25 member 39"/>
    <property type="match status" value="1"/>
</dbReference>
<dbReference type="FunFam" id="1.50.40.10:FF:000159">
    <property type="entry name" value="solute carrier family 25 member 39 isoform X1"/>
    <property type="match status" value="1"/>
</dbReference>
<dbReference type="Gene3D" id="1.50.40.10">
    <property type="entry name" value="Mitochondrial carrier domain"/>
    <property type="match status" value="2"/>
</dbReference>
<dbReference type="InterPro" id="IPR018108">
    <property type="entry name" value="Mitochondrial_sb/sol_carrier"/>
</dbReference>
<dbReference type="InterPro" id="IPR023395">
    <property type="entry name" value="Mt_carrier_dom_sf"/>
</dbReference>
<dbReference type="InterPro" id="IPR045315">
    <property type="entry name" value="Mtm1-like"/>
</dbReference>
<dbReference type="PANTHER" id="PTHR45760">
    <property type="entry name" value="FI19922P1-RELATED"/>
    <property type="match status" value="1"/>
</dbReference>
<dbReference type="PANTHER" id="PTHR45760:SF1">
    <property type="entry name" value="MITOCHONDRIAL GLUTATHIONE TRANSPORTER SLC25A39-RELATED"/>
    <property type="match status" value="1"/>
</dbReference>
<dbReference type="Pfam" id="PF00153">
    <property type="entry name" value="Mito_carr"/>
    <property type="match status" value="4"/>
</dbReference>
<dbReference type="SUPFAM" id="SSF103506">
    <property type="entry name" value="Mitochondrial carrier"/>
    <property type="match status" value="1"/>
</dbReference>
<dbReference type="PROSITE" id="PS50920">
    <property type="entry name" value="SOLCAR"/>
    <property type="match status" value="3"/>
</dbReference>
<keyword id="KW-0001">2Fe-2S</keyword>
<keyword id="KW-0025">Alternative splicing</keyword>
<keyword id="KW-0350">Heme biosynthesis</keyword>
<keyword id="KW-0408">Iron</keyword>
<keyword id="KW-0411">Iron-sulfur</keyword>
<keyword id="KW-0472">Membrane</keyword>
<keyword id="KW-0479">Metal-binding</keyword>
<keyword id="KW-0496">Mitochondrion</keyword>
<keyword id="KW-0999">Mitochondrion inner membrane</keyword>
<keyword id="KW-1185">Reference proteome</keyword>
<keyword id="KW-0677">Repeat</keyword>
<keyword id="KW-0812">Transmembrane</keyword>
<keyword id="KW-1133">Transmembrane helix</keyword>
<keyword id="KW-0813">Transport</keyword>
<sequence>MADQDPGGISPLQQMVASGAGAVVTSLFMTPLDVVKVRLQSQRPSVASELMPPSRLWSLSYAKLPSSLRSTGKCLLYCNGVLEPLYLCPNGARCATWFQDPTRFTGTMDAFVKIVRHEGTRTLWSGLPATLVMTVPATAAYFTAYDQLKAFLCGRALTSDLYAPMVAGALARLGTVTVISPLELVRTKLQAQHLSYRELGTCVRAAVAQGGWRSLWLGWGPTALRDVPFSALYWFNYELVKSWLSGLRPKDQTSVGISFVAGGISGMVAATLTLPFDVVKTQRQVALGAVEALRVMPLNTDSTWLLLRRILAESGTRGLFAGFLPRIIKAAPSCAIMISTYEFGKNFFQRLNREQLLSP</sequence>
<accession>Q17QI7</accession>
<evidence type="ECO:0000250" key="1">
    <source>
        <dbReference type="UniProtKB" id="Q9BZJ4"/>
    </source>
</evidence>
<evidence type="ECO:0000255" key="2"/>
<evidence type="ECO:0000303" key="3">
    <source ref="2"/>
</evidence>
<evidence type="ECO:0000305" key="4"/>
<name>S2539_BOVIN</name>
<comment type="function">
    <text evidence="1">Mitochondrial transporter required for glutathione import into mitochondria. Glutathione, which plays key roles in oxidative metabolism, is produced exclusively in the cytosol and is imported in many organelles. Mitochondrial glutathione is required for the activity and stability of proteins containing iron-sulfur clusters, as well as erythropoiesis.</text>
</comment>
<comment type="catalytic activity">
    <reaction evidence="1">
        <text>glutathione(in) = glutathione(out)</text>
        <dbReference type="Rhea" id="RHEA:74819"/>
        <dbReference type="ChEBI" id="CHEBI:57925"/>
    </reaction>
</comment>
<comment type="activity regulation">
    <text evidence="1">The activity of SLC25A39 is regulated by levels of mitochondrial glutathione via its ability to bind [2Fe-2S] iron-sulfur cluster. Upon physiological levels of mitochondrial glutathione, glutathione prevents iron-sulfur-binding to SLC25A39 promoting cleavage and degradation by AFG3L2. Upon depletion of mitochondrial glutathione, SLC25A39 binds iron-sulfur, preventing cleavage and degradation by AFG3L2.</text>
</comment>
<comment type="subcellular location">
    <subcellularLocation>
        <location evidence="1">Mitochondrion inner membrane</location>
        <topology evidence="2">Multi-pass membrane protein</topology>
    </subcellularLocation>
</comment>
<comment type="alternative products">
    <event type="alternative splicing"/>
    <isoform>
        <id>Q17QI7-1</id>
        <name>1</name>
        <sequence type="displayed"/>
    </isoform>
    <isoform>
        <id>Q17QI7-2</id>
        <name>2</name>
        <sequence type="described" ref="VSP_026022"/>
    </isoform>
</comment>
<comment type="PTM">
    <text evidence="1">Cleaved and degraded by AFG3L2; degradation by AFG3L2 is regulated by the ability of SLC25A39 to bind iron-sulfur. In absence of mitochondrial glutathione, SLC25A39 binds iron-sulfur, preventing cleavage and degradation by AFG3L2. The presence of mitochondrial glutathione prevents iron-sulfur-binding to SLC25A39, promoting cleavage and degradation by AFG3L2.</text>
</comment>
<comment type="similarity">
    <text evidence="4">Belongs to the mitochondrial carrier (TC 2.A.29) family.</text>
</comment>
<feature type="chain" id="PRO_0000289721" description="Mitochondrial glutathione transporter SLC25A39">
    <location>
        <begin position="1"/>
        <end position="359"/>
    </location>
</feature>
<feature type="topological domain" description="Mitochondrial intermembrane" evidence="4">
    <location>
        <begin position="1"/>
        <end position="14"/>
    </location>
</feature>
<feature type="transmembrane region" description="Helical; Name=1" evidence="2">
    <location>
        <begin position="15"/>
        <end position="35"/>
    </location>
</feature>
<feature type="topological domain" description="Mitochondrial matrix" evidence="4">
    <location>
        <begin position="36"/>
        <end position="121"/>
    </location>
</feature>
<feature type="transmembrane region" description="Helical; Name=2" evidence="2">
    <location>
        <begin position="122"/>
        <end position="142"/>
    </location>
</feature>
<feature type="topological domain" description="Mitochondrial intermembrane" evidence="4">
    <location>
        <begin position="143"/>
        <end position="164"/>
    </location>
</feature>
<feature type="transmembrane region" description="Helical; Name=3" evidence="2">
    <location>
        <begin position="165"/>
        <end position="185"/>
    </location>
</feature>
<feature type="topological domain" description="Mitochondrial matrix" evidence="4">
    <location>
        <begin position="186"/>
        <end position="214"/>
    </location>
</feature>
<feature type="transmembrane region" description="Helical; Name=4" evidence="2">
    <location>
        <begin position="215"/>
        <end position="235"/>
    </location>
</feature>
<feature type="topological domain" description="Mitochondrial intermembrane" evidence="4">
    <location>
        <begin position="236"/>
        <end position="255"/>
    </location>
</feature>
<feature type="transmembrane region" description="Helical; Name=5" evidence="2">
    <location>
        <begin position="256"/>
        <end position="276"/>
    </location>
</feature>
<feature type="topological domain" description="Mitochondrial matrix" evidence="4">
    <location>
        <begin position="277"/>
        <end position="317"/>
    </location>
</feature>
<feature type="transmembrane region" description="Helical; Name=6" evidence="2">
    <location>
        <begin position="318"/>
        <end position="338"/>
    </location>
</feature>
<feature type="topological domain" description="Mitochondrial intermembrane" evidence="4">
    <location>
        <begin position="339"/>
        <end position="359"/>
    </location>
</feature>
<feature type="repeat" description="Solcar 1">
    <location>
        <begin position="9"/>
        <end position="151"/>
    </location>
</feature>
<feature type="repeat" description="Solcar 2">
    <location>
        <begin position="159"/>
        <end position="243"/>
    </location>
</feature>
<feature type="repeat" description="Solcar 3">
    <location>
        <begin position="253"/>
        <end position="347"/>
    </location>
</feature>
<feature type="binding site" evidence="1">
    <location>
        <position position="74"/>
    </location>
    <ligand>
        <name>[2Fe-2S] cluster</name>
        <dbReference type="ChEBI" id="CHEBI:190135"/>
    </ligand>
</feature>
<feature type="binding site" evidence="1">
    <location>
        <position position="78"/>
    </location>
    <ligand>
        <name>[2Fe-2S] cluster</name>
        <dbReference type="ChEBI" id="CHEBI:190135"/>
    </ligand>
</feature>
<feature type="binding site" evidence="1">
    <location>
        <position position="88"/>
    </location>
    <ligand>
        <name>[2Fe-2S] cluster</name>
        <dbReference type="ChEBI" id="CHEBI:190135"/>
    </ligand>
</feature>
<feature type="binding site" evidence="1">
    <location>
        <position position="94"/>
    </location>
    <ligand>
        <name>[2Fe-2S] cluster</name>
        <dbReference type="ChEBI" id="CHEBI:190135"/>
    </ligand>
</feature>
<feature type="splice variant" id="VSP_026022" description="In isoform 2." evidence="3">
    <original>LPSSLRSTG</original>
    <variation>W</variation>
    <location>
        <begin position="64"/>
        <end position="72"/>
    </location>
</feature>
<protein>
    <recommendedName>
        <fullName evidence="4">Mitochondrial glutathione transporter SLC25A39</fullName>
    </recommendedName>
    <alternativeName>
        <fullName evidence="4">Solute carrier family 25 member 39</fullName>
    </alternativeName>
</protein>
<organism>
    <name type="scientific">Bos taurus</name>
    <name type="common">Bovine</name>
    <dbReference type="NCBI Taxonomy" id="9913"/>
    <lineage>
        <taxon>Eukaryota</taxon>
        <taxon>Metazoa</taxon>
        <taxon>Chordata</taxon>
        <taxon>Craniata</taxon>
        <taxon>Vertebrata</taxon>
        <taxon>Euteleostomi</taxon>
        <taxon>Mammalia</taxon>
        <taxon>Eutheria</taxon>
        <taxon>Laurasiatheria</taxon>
        <taxon>Artiodactyla</taxon>
        <taxon>Ruminantia</taxon>
        <taxon>Pecora</taxon>
        <taxon>Bovidae</taxon>
        <taxon>Bovinae</taxon>
        <taxon>Bos</taxon>
    </lineage>
</organism>
<reference key="1">
    <citation type="journal article" date="2009" name="Science">
        <title>The genome sequence of taurine cattle: a window to ruminant biology and evolution.</title>
        <authorList>
            <consortium name="The bovine genome sequencing and analysis consortium"/>
        </authorList>
    </citation>
    <scope>NUCLEOTIDE SEQUENCE [LARGE SCALE GENOMIC DNA]</scope>
    <source>
        <strain>Hereford</strain>
    </source>
</reference>
<reference key="2">
    <citation type="submission" date="2006-06" db="EMBL/GenBank/DDBJ databases">
        <authorList>
            <consortium name="NIH - Mammalian Gene Collection (MGC) project"/>
        </authorList>
    </citation>
    <scope>NUCLEOTIDE SEQUENCE [LARGE SCALE MRNA] (ISOFORM 2)</scope>
    <source>
        <strain>Hereford</strain>
        <tissue>Fetal muscle</tissue>
    </source>
</reference>
<gene>
    <name type="primary">SLC25A39</name>
</gene>